<evidence type="ECO:0000255" key="1">
    <source>
        <dbReference type="HAMAP-Rule" id="MF_00137"/>
    </source>
</evidence>
<dbReference type="EC" id="6.3.2.6" evidence="1"/>
<dbReference type="EMBL" id="CP001110">
    <property type="protein sequence ID" value="ACF43461.1"/>
    <property type="molecule type" value="Genomic_DNA"/>
</dbReference>
<dbReference type="RefSeq" id="WP_012507953.1">
    <property type="nucleotide sequence ID" value="NC_011060.1"/>
</dbReference>
<dbReference type="SMR" id="B4SGP8"/>
<dbReference type="STRING" id="324925.Ppha_1188"/>
<dbReference type="KEGG" id="pph:Ppha_1188"/>
<dbReference type="eggNOG" id="COG0152">
    <property type="taxonomic scope" value="Bacteria"/>
</dbReference>
<dbReference type="HOGENOM" id="CLU_061495_2_0_10"/>
<dbReference type="OrthoDB" id="9801549at2"/>
<dbReference type="UniPathway" id="UPA00074">
    <property type="reaction ID" value="UER00131"/>
</dbReference>
<dbReference type="Proteomes" id="UP000002724">
    <property type="component" value="Chromosome"/>
</dbReference>
<dbReference type="GO" id="GO:0005524">
    <property type="term" value="F:ATP binding"/>
    <property type="evidence" value="ECO:0007669"/>
    <property type="project" value="UniProtKB-KW"/>
</dbReference>
<dbReference type="GO" id="GO:0004639">
    <property type="term" value="F:phosphoribosylaminoimidazolesuccinocarboxamide synthase activity"/>
    <property type="evidence" value="ECO:0007669"/>
    <property type="project" value="UniProtKB-UniRule"/>
</dbReference>
<dbReference type="GO" id="GO:0006189">
    <property type="term" value="P:'de novo' IMP biosynthetic process"/>
    <property type="evidence" value="ECO:0007669"/>
    <property type="project" value="UniProtKB-UniRule"/>
</dbReference>
<dbReference type="GO" id="GO:0009236">
    <property type="term" value="P:cobalamin biosynthetic process"/>
    <property type="evidence" value="ECO:0007669"/>
    <property type="project" value="InterPro"/>
</dbReference>
<dbReference type="CDD" id="cd01415">
    <property type="entry name" value="SAICAR_synt_PurC"/>
    <property type="match status" value="1"/>
</dbReference>
<dbReference type="FunFam" id="3.30.470.20:FF:000006">
    <property type="entry name" value="Phosphoribosylaminoimidazole-succinocarboxamide synthase"/>
    <property type="match status" value="1"/>
</dbReference>
<dbReference type="Gene3D" id="3.30.470.20">
    <property type="entry name" value="ATP-grasp fold, B domain"/>
    <property type="match status" value="1"/>
</dbReference>
<dbReference type="Gene3D" id="3.30.200.20">
    <property type="entry name" value="Phosphorylase Kinase, domain 1"/>
    <property type="match status" value="1"/>
</dbReference>
<dbReference type="HAMAP" id="MF_00137">
    <property type="entry name" value="SAICAR_synth"/>
    <property type="match status" value="1"/>
</dbReference>
<dbReference type="InterPro" id="IPR028923">
    <property type="entry name" value="SAICAR_synt/ADE2_N"/>
</dbReference>
<dbReference type="InterPro" id="IPR033934">
    <property type="entry name" value="SAICAR_synt_PurC"/>
</dbReference>
<dbReference type="InterPro" id="IPR001636">
    <property type="entry name" value="SAICAR_synth"/>
</dbReference>
<dbReference type="InterPro" id="IPR050089">
    <property type="entry name" value="SAICAR_synthetase"/>
</dbReference>
<dbReference type="InterPro" id="IPR018236">
    <property type="entry name" value="SAICAR_synthetase_CS"/>
</dbReference>
<dbReference type="NCBIfam" id="TIGR00081">
    <property type="entry name" value="purC"/>
    <property type="match status" value="1"/>
</dbReference>
<dbReference type="PANTHER" id="PTHR43599">
    <property type="entry name" value="MULTIFUNCTIONAL PROTEIN ADE2"/>
    <property type="match status" value="1"/>
</dbReference>
<dbReference type="PANTHER" id="PTHR43599:SF3">
    <property type="entry name" value="SI:DKEY-6E2.2"/>
    <property type="match status" value="1"/>
</dbReference>
<dbReference type="Pfam" id="PF01259">
    <property type="entry name" value="SAICAR_synt"/>
    <property type="match status" value="1"/>
</dbReference>
<dbReference type="SUPFAM" id="SSF56104">
    <property type="entry name" value="SAICAR synthase-like"/>
    <property type="match status" value="1"/>
</dbReference>
<dbReference type="PROSITE" id="PS01057">
    <property type="entry name" value="SAICAR_SYNTHETASE_1"/>
    <property type="match status" value="1"/>
</dbReference>
<dbReference type="PROSITE" id="PS01058">
    <property type="entry name" value="SAICAR_SYNTHETASE_2"/>
    <property type="match status" value="1"/>
</dbReference>
<protein>
    <recommendedName>
        <fullName evidence="1">Phosphoribosylaminoimidazole-succinocarboxamide synthase</fullName>
        <ecNumber evidence="1">6.3.2.6</ecNumber>
    </recommendedName>
    <alternativeName>
        <fullName evidence="1">SAICAR synthetase</fullName>
    </alternativeName>
</protein>
<proteinExistence type="inferred from homology"/>
<feature type="chain" id="PRO_1000096000" description="Phosphoribosylaminoimidazole-succinocarboxamide synthase">
    <location>
        <begin position="1"/>
        <end position="236"/>
    </location>
</feature>
<organism>
    <name type="scientific">Pelodictyon phaeoclathratiforme (strain DSM 5477 / BU-1)</name>
    <dbReference type="NCBI Taxonomy" id="324925"/>
    <lineage>
        <taxon>Bacteria</taxon>
        <taxon>Pseudomonadati</taxon>
        <taxon>Chlorobiota</taxon>
        <taxon>Chlorobiia</taxon>
        <taxon>Chlorobiales</taxon>
        <taxon>Chlorobiaceae</taxon>
        <taxon>Chlorobium/Pelodictyon group</taxon>
        <taxon>Pelodictyon</taxon>
    </lineage>
</organism>
<sequence length="236" mass="26836">MKKTTQLYEGKAKKVFLTDDADLVIQEFKDDATAFNNKKKGSIAEKGVVNNAISSKLFTLLEAQGIRTHFVEKLSDRDMLCRYLDIIKVEVVVRNIAAGSLVKRYGFSEGTVLAMPIVEFYLKDDDLDDPLMNEAHAVALGVATLEELAFLKNRAEAINVLLKAFFAERKLKLVDFKLEFGRHNNEILLGDEISPDTCRFWDLETNEKMDKDRFRFDLGGVEDAYSEVQKRVLDLD</sequence>
<reference key="1">
    <citation type="submission" date="2008-06" db="EMBL/GenBank/DDBJ databases">
        <title>Complete sequence of Pelodictyon phaeoclathratiforme BU-1.</title>
        <authorList>
            <consortium name="US DOE Joint Genome Institute"/>
            <person name="Lucas S."/>
            <person name="Copeland A."/>
            <person name="Lapidus A."/>
            <person name="Glavina del Rio T."/>
            <person name="Dalin E."/>
            <person name="Tice H."/>
            <person name="Bruce D."/>
            <person name="Goodwin L."/>
            <person name="Pitluck S."/>
            <person name="Schmutz J."/>
            <person name="Larimer F."/>
            <person name="Land M."/>
            <person name="Hauser L."/>
            <person name="Kyrpides N."/>
            <person name="Mikhailova N."/>
            <person name="Liu Z."/>
            <person name="Li T."/>
            <person name="Zhao F."/>
            <person name="Overmann J."/>
            <person name="Bryant D.A."/>
            <person name="Richardson P."/>
        </authorList>
    </citation>
    <scope>NUCLEOTIDE SEQUENCE [LARGE SCALE GENOMIC DNA]</scope>
    <source>
        <strain>DSM 5477 / BU-1</strain>
    </source>
</reference>
<gene>
    <name evidence="1" type="primary">purC</name>
    <name type="ordered locus">Ppha_1188</name>
</gene>
<keyword id="KW-0067">ATP-binding</keyword>
<keyword id="KW-0436">Ligase</keyword>
<keyword id="KW-0547">Nucleotide-binding</keyword>
<keyword id="KW-0658">Purine biosynthesis</keyword>
<keyword id="KW-1185">Reference proteome</keyword>
<comment type="catalytic activity">
    <reaction evidence="1">
        <text>5-amino-1-(5-phospho-D-ribosyl)imidazole-4-carboxylate + L-aspartate + ATP = (2S)-2-[5-amino-1-(5-phospho-beta-D-ribosyl)imidazole-4-carboxamido]succinate + ADP + phosphate + 2 H(+)</text>
        <dbReference type="Rhea" id="RHEA:22628"/>
        <dbReference type="ChEBI" id="CHEBI:15378"/>
        <dbReference type="ChEBI" id="CHEBI:29991"/>
        <dbReference type="ChEBI" id="CHEBI:30616"/>
        <dbReference type="ChEBI" id="CHEBI:43474"/>
        <dbReference type="ChEBI" id="CHEBI:58443"/>
        <dbReference type="ChEBI" id="CHEBI:77657"/>
        <dbReference type="ChEBI" id="CHEBI:456216"/>
        <dbReference type="EC" id="6.3.2.6"/>
    </reaction>
</comment>
<comment type="pathway">
    <text evidence="1">Purine metabolism; IMP biosynthesis via de novo pathway; 5-amino-1-(5-phospho-D-ribosyl)imidazole-4-carboxamide from 5-amino-1-(5-phospho-D-ribosyl)imidazole-4-carboxylate: step 1/2.</text>
</comment>
<comment type="similarity">
    <text evidence="1">Belongs to the SAICAR synthetase family.</text>
</comment>
<accession>B4SGP8</accession>
<name>PUR7_PELPB</name>